<protein>
    <recommendedName>
        <fullName>Microtubule-associated protein 1S</fullName>
        <shortName>MAP-1S</shortName>
    </recommendedName>
    <alternativeName>
        <fullName>BPY2-interacting protein 1</fullName>
    </alternativeName>
    <alternativeName>
        <fullName>Microtubule-associated protein 8</fullName>
    </alternativeName>
    <component>
        <recommendedName>
            <fullName>MAP1S heavy chain</fullName>
        </recommendedName>
    </component>
    <component>
        <recommendedName>
            <fullName>MAP1S light chain</fullName>
        </recommendedName>
    </component>
</protein>
<dbReference type="EMBL" id="DQ387862">
    <property type="protein sequence ID" value="ABD47683.1"/>
    <property type="molecule type" value="mRNA"/>
</dbReference>
<dbReference type="EMBL" id="AK032300">
    <property type="protein sequence ID" value="BAC27800.1"/>
    <property type="molecule type" value="mRNA"/>
</dbReference>
<dbReference type="EMBL" id="AK162124">
    <property type="protein sequence ID" value="BAE36739.1"/>
    <property type="molecule type" value="mRNA"/>
</dbReference>
<dbReference type="EMBL" id="AC019302">
    <property type="status" value="NOT_ANNOTATED_CDS"/>
    <property type="molecule type" value="Genomic_DNA"/>
</dbReference>
<dbReference type="EMBL" id="BC052828">
    <property type="protein sequence ID" value="AAH52828.1"/>
    <property type="status" value="ALT_INIT"/>
    <property type="molecule type" value="mRNA"/>
</dbReference>
<dbReference type="CCDS" id="CCDS22387.1"/>
<dbReference type="RefSeq" id="NP_766601.2">
    <property type="nucleotide sequence ID" value="NM_173013.3"/>
</dbReference>
<dbReference type="SMR" id="Q8C052"/>
<dbReference type="BioGRID" id="234753">
    <property type="interactions" value="20"/>
</dbReference>
<dbReference type="FunCoup" id="Q8C052">
    <property type="interactions" value="464"/>
</dbReference>
<dbReference type="IntAct" id="Q8C052">
    <property type="interactions" value="4"/>
</dbReference>
<dbReference type="MINT" id="Q8C052"/>
<dbReference type="STRING" id="10090.ENSMUSP00000019405"/>
<dbReference type="GlyGen" id="Q8C052">
    <property type="glycosylation" value="3 sites, 1 O-linked glycan (1 site)"/>
</dbReference>
<dbReference type="iPTMnet" id="Q8C052"/>
<dbReference type="PhosphoSitePlus" id="Q8C052"/>
<dbReference type="jPOST" id="Q8C052"/>
<dbReference type="PaxDb" id="10090-ENSMUSP00000019405"/>
<dbReference type="PeptideAtlas" id="Q8C052"/>
<dbReference type="ProteomicsDB" id="252730"/>
<dbReference type="Pumba" id="Q8C052"/>
<dbReference type="Antibodypedia" id="27783">
    <property type="antibodies" value="195 antibodies from 26 providers"/>
</dbReference>
<dbReference type="DNASU" id="270058"/>
<dbReference type="Ensembl" id="ENSMUST00000019405.4">
    <property type="protein sequence ID" value="ENSMUSP00000019405.3"/>
    <property type="gene ID" value="ENSMUSG00000019261.4"/>
</dbReference>
<dbReference type="GeneID" id="270058"/>
<dbReference type="KEGG" id="mmu:270058"/>
<dbReference type="UCSC" id="uc009mcd.2">
    <property type="organism name" value="mouse"/>
</dbReference>
<dbReference type="AGR" id="MGI:2443304"/>
<dbReference type="CTD" id="55201"/>
<dbReference type="MGI" id="MGI:2443304">
    <property type="gene designation" value="Map1s"/>
</dbReference>
<dbReference type="VEuPathDB" id="HostDB:ENSMUSG00000019261"/>
<dbReference type="eggNOG" id="KOG3592">
    <property type="taxonomic scope" value="Eukaryota"/>
</dbReference>
<dbReference type="GeneTree" id="ENSGT00940000160221"/>
<dbReference type="HOGENOM" id="CLU_000285_2_0_1"/>
<dbReference type="InParanoid" id="Q8C052"/>
<dbReference type="OMA" id="VMHEWYA"/>
<dbReference type="OrthoDB" id="5371837at2759"/>
<dbReference type="PhylomeDB" id="Q8C052"/>
<dbReference type="TreeFam" id="TF350229"/>
<dbReference type="BioGRID-ORCS" id="270058">
    <property type="hits" value="6 hits in 77 CRISPR screens"/>
</dbReference>
<dbReference type="CD-CODE" id="CE726F99">
    <property type="entry name" value="Postsynaptic density"/>
</dbReference>
<dbReference type="ChiTaRS" id="Map1s">
    <property type="organism name" value="mouse"/>
</dbReference>
<dbReference type="PRO" id="PR:Q8C052"/>
<dbReference type="Proteomes" id="UP000000589">
    <property type="component" value="Chromosome 8"/>
</dbReference>
<dbReference type="RNAct" id="Q8C052">
    <property type="molecule type" value="protein"/>
</dbReference>
<dbReference type="Bgee" id="ENSMUSG00000019261">
    <property type="expression patterns" value="Expressed in embryonic brain and 233 other cell types or tissues"/>
</dbReference>
<dbReference type="ExpressionAtlas" id="Q8C052">
    <property type="expression patterns" value="baseline and differential"/>
</dbReference>
<dbReference type="GO" id="GO:0005813">
    <property type="term" value="C:centrosome"/>
    <property type="evidence" value="ECO:0007669"/>
    <property type="project" value="Ensembl"/>
</dbReference>
<dbReference type="GO" id="GO:0005829">
    <property type="term" value="C:cytosol"/>
    <property type="evidence" value="ECO:0000250"/>
    <property type="project" value="HGNC-UCL"/>
</dbReference>
<dbReference type="GO" id="GO:0030425">
    <property type="term" value="C:dendrite"/>
    <property type="evidence" value="ECO:0000314"/>
    <property type="project" value="HGNC-UCL"/>
</dbReference>
<dbReference type="GO" id="GO:0015630">
    <property type="term" value="C:microtubule cytoskeleton"/>
    <property type="evidence" value="ECO:0000314"/>
    <property type="project" value="MGI"/>
</dbReference>
<dbReference type="GO" id="GO:1990498">
    <property type="term" value="C:mitotic spindle microtubule"/>
    <property type="evidence" value="ECO:0007669"/>
    <property type="project" value="Ensembl"/>
</dbReference>
<dbReference type="GO" id="GO:0043025">
    <property type="term" value="C:neuronal cell body"/>
    <property type="evidence" value="ECO:0000314"/>
    <property type="project" value="HGNC-UCL"/>
</dbReference>
<dbReference type="GO" id="GO:0005730">
    <property type="term" value="C:nucleolus"/>
    <property type="evidence" value="ECO:0007669"/>
    <property type="project" value="Ensembl"/>
</dbReference>
<dbReference type="GO" id="GO:0005654">
    <property type="term" value="C:nucleoplasm"/>
    <property type="evidence" value="ECO:0007669"/>
    <property type="project" value="Ensembl"/>
</dbReference>
<dbReference type="GO" id="GO:0005634">
    <property type="term" value="C:nucleus"/>
    <property type="evidence" value="ECO:0000250"/>
    <property type="project" value="HGNC-UCL"/>
</dbReference>
<dbReference type="GO" id="GO:0048471">
    <property type="term" value="C:perinuclear region of cytoplasm"/>
    <property type="evidence" value="ECO:0000250"/>
    <property type="project" value="HGNC-UCL"/>
</dbReference>
<dbReference type="GO" id="GO:0045202">
    <property type="term" value="C:synapse"/>
    <property type="evidence" value="ECO:0007669"/>
    <property type="project" value="Ensembl"/>
</dbReference>
<dbReference type="GO" id="GO:0051015">
    <property type="term" value="F:actin filament binding"/>
    <property type="evidence" value="ECO:0000314"/>
    <property type="project" value="HGNC-UCL"/>
</dbReference>
<dbReference type="GO" id="GO:0048487">
    <property type="term" value="F:beta-tubulin binding"/>
    <property type="evidence" value="ECO:0000250"/>
    <property type="project" value="HGNC-UCL"/>
</dbReference>
<dbReference type="GO" id="GO:0003677">
    <property type="term" value="F:DNA binding"/>
    <property type="evidence" value="ECO:0000250"/>
    <property type="project" value="HGNC-UCL"/>
</dbReference>
<dbReference type="GO" id="GO:0042802">
    <property type="term" value="F:identical protein binding"/>
    <property type="evidence" value="ECO:0000314"/>
    <property type="project" value="MGI"/>
</dbReference>
<dbReference type="GO" id="GO:0008017">
    <property type="term" value="F:microtubule binding"/>
    <property type="evidence" value="ECO:0000314"/>
    <property type="project" value="HGNC-UCL"/>
</dbReference>
<dbReference type="GO" id="GO:0015631">
    <property type="term" value="F:tubulin binding"/>
    <property type="evidence" value="ECO:0000314"/>
    <property type="project" value="HGNC-UCL"/>
</dbReference>
<dbReference type="GO" id="GO:0006915">
    <property type="term" value="P:apoptotic process"/>
    <property type="evidence" value="ECO:0007669"/>
    <property type="project" value="UniProtKB-KW"/>
</dbReference>
<dbReference type="GO" id="GO:0007420">
    <property type="term" value="P:brain development"/>
    <property type="evidence" value="ECO:0000270"/>
    <property type="project" value="HGNC-UCL"/>
</dbReference>
<dbReference type="GO" id="GO:0051310">
    <property type="term" value="P:metaphase chromosome alignment"/>
    <property type="evidence" value="ECO:0007669"/>
    <property type="project" value="Ensembl"/>
</dbReference>
<dbReference type="GO" id="GO:0034454">
    <property type="term" value="P:microtubule anchoring at centrosome"/>
    <property type="evidence" value="ECO:0007669"/>
    <property type="project" value="Ensembl"/>
</dbReference>
<dbReference type="GO" id="GO:0001578">
    <property type="term" value="P:microtubule bundle formation"/>
    <property type="evidence" value="ECO:0000250"/>
    <property type="project" value="HGNC-UCL"/>
</dbReference>
<dbReference type="GO" id="GO:0000226">
    <property type="term" value="P:microtubule cytoskeleton organization"/>
    <property type="evidence" value="ECO:0000314"/>
    <property type="project" value="MGI"/>
</dbReference>
<dbReference type="GO" id="GO:0007052">
    <property type="term" value="P:mitotic spindle organization"/>
    <property type="evidence" value="ECO:0007669"/>
    <property type="project" value="Ensembl"/>
</dbReference>
<dbReference type="GO" id="GO:0007399">
    <property type="term" value="P:nervous system development"/>
    <property type="evidence" value="ECO:0000270"/>
    <property type="project" value="HGNC-UCL"/>
</dbReference>
<dbReference type="GO" id="GO:0048812">
    <property type="term" value="P:neuron projection morphogenesis"/>
    <property type="evidence" value="ECO:0000250"/>
    <property type="project" value="HGNC-UCL"/>
</dbReference>
<dbReference type="InterPro" id="IPR026074">
    <property type="entry name" value="MAP1"/>
</dbReference>
<dbReference type="InterPro" id="IPR056617">
    <property type="entry name" value="MAP1B/S_N"/>
</dbReference>
<dbReference type="InterPro" id="IPR036866">
    <property type="entry name" value="RibonucZ/Hydroxyglut_hydro"/>
</dbReference>
<dbReference type="PANTHER" id="PTHR13843">
    <property type="entry name" value="MICROTUBULE-ASSOCIATED PROTEIN"/>
    <property type="match status" value="1"/>
</dbReference>
<dbReference type="PANTHER" id="PTHR13843:SF11">
    <property type="entry name" value="MICROTUBULE-ASSOCIATED PROTEIN 1S"/>
    <property type="match status" value="1"/>
</dbReference>
<dbReference type="Pfam" id="PF23415">
    <property type="entry name" value="MAPB1_N"/>
    <property type="match status" value="1"/>
</dbReference>
<dbReference type="Pfam" id="PF25281">
    <property type="entry name" value="MBL_MAP1B"/>
    <property type="match status" value="2"/>
</dbReference>
<dbReference type="SUPFAM" id="SSF56281">
    <property type="entry name" value="Metallo-hydrolase/oxidoreductase"/>
    <property type="match status" value="1"/>
</dbReference>
<proteinExistence type="evidence at protein level"/>
<organism>
    <name type="scientific">Mus musculus</name>
    <name type="common">Mouse</name>
    <dbReference type="NCBI Taxonomy" id="10090"/>
    <lineage>
        <taxon>Eukaryota</taxon>
        <taxon>Metazoa</taxon>
        <taxon>Chordata</taxon>
        <taxon>Craniata</taxon>
        <taxon>Vertebrata</taxon>
        <taxon>Euteleostomi</taxon>
        <taxon>Mammalia</taxon>
        <taxon>Eutheria</taxon>
        <taxon>Euarchontoglires</taxon>
        <taxon>Glires</taxon>
        <taxon>Rodentia</taxon>
        <taxon>Myomorpha</taxon>
        <taxon>Muroidea</taxon>
        <taxon>Muridae</taxon>
        <taxon>Murinae</taxon>
        <taxon>Mus</taxon>
        <taxon>Mus</taxon>
    </lineage>
</organism>
<sequence>MAAVMAAPEAVEAPSSLLLLVVGGECGCPGLLAYVMEELERGVRSWEDVDPAVCSLDEQLKAFVSRHSATFSSIVKGQRSLHHRGETLETLVLLNPSDKSLCDELRNLLMDPAPHKLLVLAGPCLEETGELLLQTGGFSAHHFLQVLGDKEVQDALASAPAAPALTVSCPTFGDWALLGPVPGLQLRLNPPAQLPASEGLRAFLEYVAESLEPPSPFELLEPPAAGGFLRLARPCCYVFPGGLGDAAFFAVNGFTVLVNGGSNPKSSFWKLVRHLDRVDAVLVTHAGADSLPGLNSLLRRKLAEREAAAGPQGQHEERLRRLLSPALGVVFLNAREAASRLRGGEDEAVCARSLLRSLGIAPLPLQRGPQPSCPTVLFEKLGVGRLELFVLHPPPGDPAAPACALLVWQPAAPGDKVVRVLFPGRTPPARLLDGLQRLQHLPCLRRPVVTTHDLEAPSRANSQDSLASRDSARKEPVRGTVGSIANRSTVRREPALATRDQKKDTRSGPTQPTARDTRRSGPGVVNTKPRVSQNGPRAPVLAAPLTAPVAECPGEAENILESERPPAPSPTLSPAQSPPPTAPGNSPERLSLSPLRPEPAPDASPSATTPTLTTPSLPAELGSPHSTEVDESLSVSFEQVLPAGDPGLSLPLRLARRSTSPHDVDLCLVSPCEFSHRKPPPPASPGSSDSSARSQERPPETPPTSVSESLPTLSDSDPVPVADSDDDAGSESAARDPPPTPRVPPPLPDVPGICMVDPEALPPRARQPLNTTNPSRSRKAPARPSSASATPRAATVAAKTKGPAGDRNRPLSARSEPADRPGRVPLTRKPSVPKTVPKMASATRLSSGPSGRPAPLAAGSPVYLDLAYLPGGGAGHLDQNFFLRVRALCYVISGQGQRQEEGLRAVLDALLAGKRQWDLDLQVTLIPTFDSAVMHRWYEETHAQHQALGIRVLGSGSLVSMQDEAFPACKVEF</sequence>
<name>MAP1S_MOUSE</name>
<keyword id="KW-0053">Apoptosis</keyword>
<keyword id="KW-0963">Cytoplasm</keyword>
<keyword id="KW-0206">Cytoskeleton</keyword>
<keyword id="KW-0238">DNA-binding</keyword>
<keyword id="KW-0493">Microtubule</keyword>
<keyword id="KW-0539">Nucleus</keyword>
<keyword id="KW-0597">Phosphoprotein</keyword>
<keyword id="KW-1185">Reference proteome</keyword>
<reference key="1">
    <citation type="journal article" date="2006" name="Biochem. Biophys. Res. Commun.">
        <title>Microtubule-associated protein 8 contains two microtubule binding sites.</title>
        <authorList>
            <person name="Ding J."/>
            <person name="Valle A."/>
            <person name="Allen E."/>
            <person name="Wang W."/>
            <person name="Nardine T."/>
            <person name="Zhang Y."/>
            <person name="Peng L."/>
            <person name="Yang Y."/>
        </authorList>
    </citation>
    <scope>NUCLEOTIDE SEQUENCE [MRNA]</scope>
    <scope>SUBUNIT</scope>
    <scope>INTERACTION WITH MICROTUBULES AND ACTIN</scope>
    <scope>TISSUE SPECIFICITY</scope>
    <scope>DEVELOPMENTAL STAGE</scope>
    <source>
        <strain>C57BL/6J</strain>
        <tissue>Brain</tissue>
    </source>
</reference>
<reference key="2">
    <citation type="journal article" date="2005" name="Science">
        <title>The transcriptional landscape of the mammalian genome.</title>
        <authorList>
            <person name="Carninci P."/>
            <person name="Kasukawa T."/>
            <person name="Katayama S."/>
            <person name="Gough J."/>
            <person name="Frith M.C."/>
            <person name="Maeda N."/>
            <person name="Oyama R."/>
            <person name="Ravasi T."/>
            <person name="Lenhard B."/>
            <person name="Wells C."/>
            <person name="Kodzius R."/>
            <person name="Shimokawa K."/>
            <person name="Bajic V.B."/>
            <person name="Brenner S.E."/>
            <person name="Batalov S."/>
            <person name="Forrest A.R."/>
            <person name="Zavolan M."/>
            <person name="Davis M.J."/>
            <person name="Wilming L.G."/>
            <person name="Aidinis V."/>
            <person name="Allen J.E."/>
            <person name="Ambesi-Impiombato A."/>
            <person name="Apweiler R."/>
            <person name="Aturaliya R.N."/>
            <person name="Bailey T.L."/>
            <person name="Bansal M."/>
            <person name="Baxter L."/>
            <person name="Beisel K.W."/>
            <person name="Bersano T."/>
            <person name="Bono H."/>
            <person name="Chalk A.M."/>
            <person name="Chiu K.P."/>
            <person name="Choudhary V."/>
            <person name="Christoffels A."/>
            <person name="Clutterbuck D.R."/>
            <person name="Crowe M.L."/>
            <person name="Dalla E."/>
            <person name="Dalrymple B.P."/>
            <person name="de Bono B."/>
            <person name="Della Gatta G."/>
            <person name="di Bernardo D."/>
            <person name="Down T."/>
            <person name="Engstrom P."/>
            <person name="Fagiolini M."/>
            <person name="Faulkner G."/>
            <person name="Fletcher C.F."/>
            <person name="Fukushima T."/>
            <person name="Furuno M."/>
            <person name="Futaki S."/>
            <person name="Gariboldi M."/>
            <person name="Georgii-Hemming P."/>
            <person name="Gingeras T.R."/>
            <person name="Gojobori T."/>
            <person name="Green R.E."/>
            <person name="Gustincich S."/>
            <person name="Harbers M."/>
            <person name="Hayashi Y."/>
            <person name="Hensch T.K."/>
            <person name="Hirokawa N."/>
            <person name="Hill D."/>
            <person name="Huminiecki L."/>
            <person name="Iacono M."/>
            <person name="Ikeo K."/>
            <person name="Iwama A."/>
            <person name="Ishikawa T."/>
            <person name="Jakt M."/>
            <person name="Kanapin A."/>
            <person name="Katoh M."/>
            <person name="Kawasawa Y."/>
            <person name="Kelso J."/>
            <person name="Kitamura H."/>
            <person name="Kitano H."/>
            <person name="Kollias G."/>
            <person name="Krishnan S.P."/>
            <person name="Kruger A."/>
            <person name="Kummerfeld S.K."/>
            <person name="Kurochkin I.V."/>
            <person name="Lareau L.F."/>
            <person name="Lazarevic D."/>
            <person name="Lipovich L."/>
            <person name="Liu J."/>
            <person name="Liuni S."/>
            <person name="McWilliam S."/>
            <person name="Madan Babu M."/>
            <person name="Madera M."/>
            <person name="Marchionni L."/>
            <person name="Matsuda H."/>
            <person name="Matsuzawa S."/>
            <person name="Miki H."/>
            <person name="Mignone F."/>
            <person name="Miyake S."/>
            <person name="Morris K."/>
            <person name="Mottagui-Tabar S."/>
            <person name="Mulder N."/>
            <person name="Nakano N."/>
            <person name="Nakauchi H."/>
            <person name="Ng P."/>
            <person name="Nilsson R."/>
            <person name="Nishiguchi S."/>
            <person name="Nishikawa S."/>
            <person name="Nori F."/>
            <person name="Ohara O."/>
            <person name="Okazaki Y."/>
            <person name="Orlando V."/>
            <person name="Pang K.C."/>
            <person name="Pavan W.J."/>
            <person name="Pavesi G."/>
            <person name="Pesole G."/>
            <person name="Petrovsky N."/>
            <person name="Piazza S."/>
            <person name="Reed J."/>
            <person name="Reid J.F."/>
            <person name="Ring B.Z."/>
            <person name="Ringwald M."/>
            <person name="Rost B."/>
            <person name="Ruan Y."/>
            <person name="Salzberg S.L."/>
            <person name="Sandelin A."/>
            <person name="Schneider C."/>
            <person name="Schoenbach C."/>
            <person name="Sekiguchi K."/>
            <person name="Semple C.A."/>
            <person name="Seno S."/>
            <person name="Sessa L."/>
            <person name="Sheng Y."/>
            <person name="Shibata Y."/>
            <person name="Shimada H."/>
            <person name="Shimada K."/>
            <person name="Silva D."/>
            <person name="Sinclair B."/>
            <person name="Sperling S."/>
            <person name="Stupka E."/>
            <person name="Sugiura K."/>
            <person name="Sultana R."/>
            <person name="Takenaka Y."/>
            <person name="Taki K."/>
            <person name="Tammoja K."/>
            <person name="Tan S.L."/>
            <person name="Tang S."/>
            <person name="Taylor M.S."/>
            <person name="Tegner J."/>
            <person name="Teichmann S.A."/>
            <person name="Ueda H.R."/>
            <person name="van Nimwegen E."/>
            <person name="Verardo R."/>
            <person name="Wei C.L."/>
            <person name="Yagi K."/>
            <person name="Yamanishi H."/>
            <person name="Zabarovsky E."/>
            <person name="Zhu S."/>
            <person name="Zimmer A."/>
            <person name="Hide W."/>
            <person name="Bult C."/>
            <person name="Grimmond S.M."/>
            <person name="Teasdale R.D."/>
            <person name="Liu E.T."/>
            <person name="Brusic V."/>
            <person name="Quackenbush J."/>
            <person name="Wahlestedt C."/>
            <person name="Mattick J.S."/>
            <person name="Hume D.A."/>
            <person name="Kai C."/>
            <person name="Sasaki D."/>
            <person name="Tomaru Y."/>
            <person name="Fukuda S."/>
            <person name="Kanamori-Katayama M."/>
            <person name="Suzuki M."/>
            <person name="Aoki J."/>
            <person name="Arakawa T."/>
            <person name="Iida J."/>
            <person name="Imamura K."/>
            <person name="Itoh M."/>
            <person name="Kato T."/>
            <person name="Kawaji H."/>
            <person name="Kawagashira N."/>
            <person name="Kawashima T."/>
            <person name="Kojima M."/>
            <person name="Kondo S."/>
            <person name="Konno H."/>
            <person name="Nakano K."/>
            <person name="Ninomiya N."/>
            <person name="Nishio T."/>
            <person name="Okada M."/>
            <person name="Plessy C."/>
            <person name="Shibata K."/>
            <person name="Shiraki T."/>
            <person name="Suzuki S."/>
            <person name="Tagami M."/>
            <person name="Waki K."/>
            <person name="Watahiki A."/>
            <person name="Okamura-Oho Y."/>
            <person name="Suzuki H."/>
            <person name="Kawai J."/>
            <person name="Hayashizaki Y."/>
        </authorList>
    </citation>
    <scope>NUCLEOTIDE SEQUENCE [LARGE SCALE MRNA]</scope>
    <source>
        <strain>C57BL/6J</strain>
        <tissue>Egg</tissue>
        <tissue>Olfactory bulb</tissue>
    </source>
</reference>
<reference key="3">
    <citation type="journal article" date="2009" name="PLoS Biol.">
        <title>Lineage-specific biology revealed by a finished genome assembly of the mouse.</title>
        <authorList>
            <person name="Church D.M."/>
            <person name="Goodstadt L."/>
            <person name="Hillier L.W."/>
            <person name="Zody M.C."/>
            <person name="Goldstein S."/>
            <person name="She X."/>
            <person name="Bult C.J."/>
            <person name="Agarwala R."/>
            <person name="Cherry J.L."/>
            <person name="DiCuccio M."/>
            <person name="Hlavina W."/>
            <person name="Kapustin Y."/>
            <person name="Meric P."/>
            <person name="Maglott D."/>
            <person name="Birtle Z."/>
            <person name="Marques A.C."/>
            <person name="Graves T."/>
            <person name="Zhou S."/>
            <person name="Teague B."/>
            <person name="Potamousis K."/>
            <person name="Churas C."/>
            <person name="Place M."/>
            <person name="Herschleb J."/>
            <person name="Runnheim R."/>
            <person name="Forrest D."/>
            <person name="Amos-Landgraf J."/>
            <person name="Schwartz D.C."/>
            <person name="Cheng Z."/>
            <person name="Lindblad-Toh K."/>
            <person name="Eichler E.E."/>
            <person name="Ponting C.P."/>
        </authorList>
    </citation>
    <scope>NUCLEOTIDE SEQUENCE [LARGE SCALE GENOMIC DNA]</scope>
    <source>
        <strain>C57BL/6J</strain>
    </source>
</reference>
<reference key="4">
    <citation type="journal article" date="2004" name="Genome Res.">
        <title>The status, quality, and expansion of the NIH full-length cDNA project: the Mammalian Gene Collection (MGC).</title>
        <authorList>
            <consortium name="The MGC Project Team"/>
        </authorList>
    </citation>
    <scope>NUCLEOTIDE SEQUENCE [LARGE SCALE MRNA] OF 380-973</scope>
    <source>
        <strain>C57BL/6NCr</strain>
        <tissue>Hematopoietic stem cell</tissue>
    </source>
</reference>
<reference key="5">
    <citation type="journal article" date="2005" name="J. Biol. Chem.">
        <title>Microtubule-associated protein 1S, a short and ubiquitously expressed member of the microtubule-associated protein 1 family.</title>
        <authorList>
            <person name="Orban-Nemeth Z."/>
            <person name="Simader H."/>
            <person name="Badurek S."/>
            <person name="Trancikova A."/>
            <person name="Propst F."/>
        </authorList>
    </citation>
    <scope>FUNCTION</scope>
    <scope>SUBUNIT</scope>
    <scope>INTERACTION WITH MICROTUBULES AND ACTIN</scope>
    <scope>SUBCELLULAR LOCATION</scope>
    <scope>TISSUE SPECIFICITY</scope>
</reference>
<reference key="6">
    <citation type="journal article" date="2006" name="Hum. Mol. Genet.">
        <title>Gene targeting of GAN in mouse causes a toxic accumulation of microtubule-associated protein 8 and impaired retrograde axonal transport.</title>
        <authorList>
            <person name="Ding J."/>
            <person name="Allen E."/>
            <person name="Wang W."/>
            <person name="Valle A."/>
            <person name="Wu C."/>
            <person name="Nardine T."/>
            <person name="Cui B."/>
            <person name="Yi J."/>
            <person name="Taylor A."/>
            <person name="Jeon N.L."/>
            <person name="Chu S."/>
            <person name="So Y."/>
            <person name="Vogel H."/>
            <person name="Tolwani R."/>
            <person name="Mobley W."/>
            <person name="Yang Y."/>
        </authorList>
    </citation>
    <scope>INTERACTION WITH GAN</scope>
</reference>
<reference key="7">
    <citation type="journal article" date="2010" name="Cell">
        <title>A tissue-specific atlas of mouse protein phosphorylation and expression.</title>
        <authorList>
            <person name="Huttlin E.L."/>
            <person name="Jedrychowski M.P."/>
            <person name="Elias J.E."/>
            <person name="Goswami T."/>
            <person name="Rad R."/>
            <person name="Beausoleil S.A."/>
            <person name="Villen J."/>
            <person name="Haas W."/>
            <person name="Sowa M.E."/>
            <person name="Gygi S.P."/>
        </authorList>
    </citation>
    <scope>PHOSPHORYLATION [LARGE SCALE ANALYSIS] AT SER-462; SER-660 AND SER-724</scope>
    <scope>IDENTIFICATION BY MASS SPECTROMETRY [LARGE SCALE ANALYSIS]</scope>
    <source>
        <tissue>Brain</tissue>
        <tissue>Brown adipose tissue</tissue>
        <tissue>Heart</tissue>
        <tissue>Kidney</tissue>
        <tissue>Liver</tissue>
        <tissue>Lung</tissue>
        <tissue>Pancreas</tissue>
        <tissue>Spleen</tissue>
        <tissue>Testis</tissue>
    </source>
</reference>
<comment type="function">
    <text evidence="1 5">Microtubule-associated protein that mediates aggregation of mitochondria resulting in cell death and genomic destruction (MAGD). Plays a role in anchoring the microtubule organizing center to the centrosomes. Binds to DNA. Plays a role in apoptosis (By similarity). Involved in the formation of microtubule bundles.</text>
</comment>
<comment type="subunit">
    <text evidence="1 5 6 7">Heterodimer of a heavy and a light chain. Interacts with microtubules and actin. Both MAP1S heavy and light chains interact with microtubules. MAP1S light chain interacts with actin. Interacts with ESR1, LRPPRC, RASSF1, microtubules and VCY2. Interacts with WDR47 (via N-terminus of light chain) (By similarity). Interacts (via C-terminus) with GAN (via Kelch domains).</text>
</comment>
<comment type="subcellular location">
    <subcellularLocation>
        <location evidence="1">Nucleus</location>
    </subcellularLocation>
    <subcellularLocation>
        <location evidence="1">Cytoplasm</location>
        <location evidence="1">Cytosol</location>
    </subcellularLocation>
    <subcellularLocation>
        <location evidence="5">Cytoplasm</location>
        <location evidence="5">Cytoskeleton</location>
    </subcellularLocation>
    <subcellularLocation>
        <location evidence="5">Cytoplasm</location>
        <location evidence="5">Cytoskeleton</location>
        <location evidence="5">Spindle</location>
    </subcellularLocation>
    <text evidence="1">Detected in perinuclear punctate network corresponding to mitochondrial aggregates and in the nucleus in cells exhibiting apoptosis. Associated specifically with microtubules stabilized by paclitaxel and colocalizes with RASSF1. In interphase cells, shows a diffuse cytoplasmic staining with partial localization to the microtubules. During the different stages of mitosis detected at the spindle microtubules. Detected in filopodia-like protrusions and synapses (By similarity).</text>
</comment>
<comment type="tissue specificity">
    <text evidence="5 6">Expressed in ventral and dorsal horns of the spinal cord, hippocampus, cerebral cortex, molecular, Purkinje and granular cell layers of the cerebellum and in dorsal root ganglia of the PNS (at protein level). Expressed in brain, testis, heart, lung, kidney and liver.</text>
</comment>
<comment type="developmental stage">
    <text evidence="6">Expressed in embryo at 10 dpc onwards (at protein level).</text>
</comment>
<comment type="domain">
    <text evidence="1">Its C-terminal part of the heavy chain interacts with ESR1 (By similarity). The N-terminus of the heavy chain associates with the C-terminus of the light chain to form the heterodimer complex.</text>
</comment>
<comment type="similarity">
    <text evidence="8">Belongs to the MAP1 family.</text>
</comment>
<comment type="sequence caution" evidence="8">
    <conflict type="erroneous initiation">
        <sequence resource="EMBL-CDS" id="AAH52828"/>
    </conflict>
</comment>
<comment type="sequence caution" evidence="8">
    <conflict type="miscellaneous discrepancy">
        <sequence resource="EMBL-CDS" id="AAH52828"/>
    </conflict>
    <text>Contaminating sequence. At the N-terminus.</text>
</comment>
<feature type="chain" id="PRO_0000311382" description="Microtubule-associated protein 1S">
    <location>
        <begin position="1"/>
        <end position="973"/>
    </location>
</feature>
<feature type="chain" id="PRO_0000311383" description="MAP1S heavy chain">
    <location>
        <begin position="1"/>
        <end position="742"/>
    </location>
</feature>
<feature type="chain" id="PRO_0000311384" description="MAP1S light chain">
    <location>
        <begin position="743"/>
        <end position="973"/>
    </location>
</feature>
<feature type="region of interest" description="Necessary for the microtubule-organizing center localization" evidence="1">
    <location>
        <begin position="1"/>
        <end position="716"/>
    </location>
</feature>
<feature type="region of interest" description="Disordered" evidence="4">
    <location>
        <begin position="452"/>
        <end position="538"/>
    </location>
</feature>
<feature type="region of interest" description="Disordered" evidence="4">
    <location>
        <begin position="560"/>
        <end position="853"/>
    </location>
</feature>
<feature type="region of interest" description="Necessary for interaction with RASSF1" evidence="1">
    <location>
        <begin position="601"/>
        <end position="973"/>
    </location>
</feature>
<feature type="region of interest" description="Necessary for association with microtubules">
    <location>
        <begin position="645"/>
        <end position="880"/>
    </location>
</feature>
<feature type="region of interest" description="Necessary for association with actin">
    <location>
        <begin position="875"/>
        <end position="973"/>
    </location>
</feature>
<feature type="region of interest" description="Necessary for the mitochondrial aggregation and genome destruction" evidence="1">
    <location>
        <begin position="881"/>
        <end position="905"/>
    </location>
</feature>
<feature type="compositionally biased region" description="Polar residues" evidence="4">
    <location>
        <begin position="459"/>
        <end position="468"/>
    </location>
</feature>
<feature type="compositionally biased region" description="Basic and acidic residues" evidence="4">
    <location>
        <begin position="490"/>
        <end position="506"/>
    </location>
</feature>
<feature type="compositionally biased region" description="Pro residues" evidence="4">
    <location>
        <begin position="565"/>
        <end position="582"/>
    </location>
</feature>
<feature type="compositionally biased region" description="Low complexity" evidence="4">
    <location>
        <begin position="603"/>
        <end position="621"/>
    </location>
</feature>
<feature type="compositionally biased region" description="Low complexity" evidence="4">
    <location>
        <begin position="703"/>
        <end position="722"/>
    </location>
</feature>
<feature type="compositionally biased region" description="Pro residues" evidence="4">
    <location>
        <begin position="736"/>
        <end position="749"/>
    </location>
</feature>
<feature type="compositionally biased region" description="Low complexity" evidence="4">
    <location>
        <begin position="782"/>
        <end position="801"/>
    </location>
</feature>
<feature type="modified residue" description="Phosphoserine" evidence="9">
    <location>
        <position position="462"/>
    </location>
</feature>
<feature type="modified residue" description="Phosphoserine" evidence="2">
    <location>
        <position position="586"/>
    </location>
</feature>
<feature type="modified residue" description="Phosphoserine" evidence="3">
    <location>
        <position position="591"/>
    </location>
</feature>
<feature type="modified residue" description="Phosphoserine" evidence="3">
    <location>
        <position position="593"/>
    </location>
</feature>
<feature type="modified residue" description="Phosphoserine" evidence="9">
    <location>
        <position position="660"/>
    </location>
</feature>
<feature type="modified residue" description="Phosphoserine" evidence="3">
    <location>
        <position position="684"/>
    </location>
</feature>
<feature type="modified residue" description="Phosphoserine" evidence="9">
    <location>
        <position position="724"/>
    </location>
</feature>
<feature type="sequence conflict" description="In Ref. 4; AAH52828." evidence="8" ref="4">
    <original>E</original>
    <variation>G</variation>
    <location>
        <position position="475"/>
    </location>
</feature>
<feature type="sequence conflict" description="In Ref. 1; ABD47683 and 2; BAC27800." evidence="8" ref="1 2">
    <original>P</original>
    <variation>T</variation>
    <location>
        <position position="680"/>
    </location>
</feature>
<evidence type="ECO:0000250" key="1"/>
<evidence type="ECO:0000250" key="2">
    <source>
        <dbReference type="UniProtKB" id="P0C5W1"/>
    </source>
</evidence>
<evidence type="ECO:0000250" key="3">
    <source>
        <dbReference type="UniProtKB" id="Q66K74"/>
    </source>
</evidence>
<evidence type="ECO:0000256" key="4">
    <source>
        <dbReference type="SAM" id="MobiDB-lite"/>
    </source>
</evidence>
<evidence type="ECO:0000269" key="5">
    <source>
    </source>
</evidence>
<evidence type="ECO:0000269" key="6">
    <source>
    </source>
</evidence>
<evidence type="ECO:0000269" key="7">
    <source>
    </source>
</evidence>
<evidence type="ECO:0000305" key="8"/>
<evidence type="ECO:0007744" key="9">
    <source>
    </source>
</evidence>
<gene>
    <name type="primary">Map1s</name>
    <name type="synonym">Bpy2ip1</name>
    <name type="synonym">Map8</name>
    <name type="synonym">Mtap1s</name>
</gene>
<accession>Q8C052</accession>
<accession>E9QKR8</accession>
<accession>Q3TSD6</accession>
<accession>Q7TMW8</accession>